<feature type="initiator methionine" description="Removed" evidence="2">
    <location>
        <position position="1"/>
    </location>
</feature>
<feature type="chain" id="PRO_0000343609" description="Glycolipid transfer protein">
    <location>
        <begin position="2"/>
        <end position="209"/>
    </location>
</feature>
<feature type="repeat" description="1">
    <location>
        <begin position="45"/>
        <end position="55"/>
    </location>
</feature>
<feature type="repeat" description="2">
    <location>
        <begin position="56"/>
        <end position="66"/>
    </location>
</feature>
<feature type="region of interest" description="2 X 12 AA approximate tandem repeats">
    <location>
        <begin position="45"/>
        <end position="66"/>
    </location>
</feature>
<feature type="binding site" evidence="3">
    <location>
        <begin position="48"/>
        <end position="55"/>
    </location>
    <ligand>
        <name>beta-D-galactosyl-(1-&gt;4)-beta-D-glucosyl-(1&lt;-&gt;1)-N-[(9Z)-octadecenoyl]-sphing-4-enine</name>
        <dbReference type="ChEBI" id="CHEBI:131557"/>
    </ligand>
</feature>
<feature type="binding site" evidence="3">
    <location>
        <position position="140"/>
    </location>
    <ligand>
        <name>beta-D-galactosyl-(1-&gt;4)-beta-D-glucosyl-(1&lt;-&gt;1)-N-[(9Z)-octadecenoyl]-sphing-4-enine</name>
        <dbReference type="ChEBI" id="CHEBI:131557"/>
    </ligand>
</feature>
<feature type="binding site" evidence="3">
    <location>
        <position position="207"/>
    </location>
    <ligand>
        <name>beta-D-galactosyl-(1-&gt;4)-beta-D-glucosyl-(1&lt;-&gt;1)-N-[(9Z)-octadecenoyl]-sphing-4-enine</name>
        <dbReference type="ChEBI" id="CHEBI:131557"/>
    </ligand>
</feature>
<feature type="modified residue" description="N-acetylalanine" evidence="2">
    <location>
        <position position="2"/>
    </location>
</feature>
<accession>B0BNM9</accession>
<protein>
    <recommendedName>
        <fullName>Glycolipid transfer protein</fullName>
        <shortName>GLTP</shortName>
    </recommendedName>
</protein>
<sequence>MALLAEHLLKPLPADRQIETGPFLEAVAHLPPFFDCLGSPVFTPIKADISGNITKIKAVYDTDPAKFKTLQNILEVEKGMYGAEWPKVGATLALLWLKRGLRFIQVFLQSICDGERDENHPNLIRVNANKAYEMALKKYHGWLVQKIFKAALYAAPYKSDFLKALSKGQNVTEEECLEKIRLFLVNYTATIDAIYEMYTKMNAELDYTV</sequence>
<comment type="function">
    <text evidence="1">Accelerates the intermembrane transfer of various glycolipids. Catalyzes the transfer of various glycosphingolipids between membranes but does not catalyze the transfer of phospholipids. May be involved in the intracellular translocation of glucosylceramides (By similarity).</text>
</comment>
<comment type="subunit">
    <text evidence="1">Monomer.</text>
</comment>
<comment type="subcellular location">
    <subcellularLocation>
        <location evidence="1">Cytoplasm</location>
    </subcellularLocation>
</comment>
<comment type="similarity">
    <text evidence="4">Belongs to the GLTP family.</text>
</comment>
<evidence type="ECO:0000250" key="1"/>
<evidence type="ECO:0000250" key="2">
    <source>
        <dbReference type="UniProtKB" id="P68266"/>
    </source>
</evidence>
<evidence type="ECO:0000250" key="3">
    <source>
        <dbReference type="UniProtKB" id="Q9NZD2"/>
    </source>
</evidence>
<evidence type="ECO:0000305" key="4"/>
<proteinExistence type="evidence at transcript level"/>
<name>GLTP_RAT</name>
<keyword id="KW-0007">Acetylation</keyword>
<keyword id="KW-0963">Cytoplasm</keyword>
<keyword id="KW-0445">Lipid transport</keyword>
<keyword id="KW-1185">Reference proteome</keyword>
<keyword id="KW-0677">Repeat</keyword>
<keyword id="KW-0813">Transport</keyword>
<reference key="1">
    <citation type="submission" date="2005-08" db="EMBL/GenBank/DDBJ databases">
        <authorList>
            <person name="Mural R.J."/>
            <person name="Adams M.D."/>
            <person name="Myers E.W."/>
            <person name="Smith H.O."/>
            <person name="Venter J.C."/>
        </authorList>
    </citation>
    <scope>NUCLEOTIDE SEQUENCE [LARGE SCALE GENOMIC DNA]</scope>
    <source>
        <strain>Brown Norway</strain>
    </source>
</reference>
<reference key="2">
    <citation type="journal article" date="2004" name="Genome Res.">
        <title>The status, quality, and expansion of the NIH full-length cDNA project: the Mammalian Gene Collection (MGC).</title>
        <authorList>
            <consortium name="The MGC Project Team"/>
        </authorList>
    </citation>
    <scope>NUCLEOTIDE SEQUENCE [LARGE SCALE MRNA]</scope>
    <source>
        <tissue>Prostate</tissue>
    </source>
</reference>
<organism>
    <name type="scientific">Rattus norvegicus</name>
    <name type="common">Rat</name>
    <dbReference type="NCBI Taxonomy" id="10116"/>
    <lineage>
        <taxon>Eukaryota</taxon>
        <taxon>Metazoa</taxon>
        <taxon>Chordata</taxon>
        <taxon>Craniata</taxon>
        <taxon>Vertebrata</taxon>
        <taxon>Euteleostomi</taxon>
        <taxon>Mammalia</taxon>
        <taxon>Eutheria</taxon>
        <taxon>Euarchontoglires</taxon>
        <taxon>Glires</taxon>
        <taxon>Rodentia</taxon>
        <taxon>Myomorpha</taxon>
        <taxon>Muroidea</taxon>
        <taxon>Muridae</taxon>
        <taxon>Murinae</taxon>
        <taxon>Rattus</taxon>
    </lineage>
</organism>
<gene>
    <name type="primary">GLTP</name>
</gene>
<dbReference type="EMBL" id="CH473973">
    <property type="protein sequence ID" value="EDM13930.1"/>
    <property type="molecule type" value="Genomic_DNA"/>
</dbReference>
<dbReference type="EMBL" id="BC158884">
    <property type="protein sequence ID" value="AAI58885.1"/>
    <property type="molecule type" value="mRNA"/>
</dbReference>
<dbReference type="RefSeq" id="NP_001127885.1">
    <property type="nucleotide sequence ID" value="NM_001134413.1"/>
</dbReference>
<dbReference type="SMR" id="B0BNM9"/>
<dbReference type="BioGRID" id="252660">
    <property type="interactions" value="1"/>
</dbReference>
<dbReference type="FunCoup" id="B0BNM9">
    <property type="interactions" value="1773"/>
</dbReference>
<dbReference type="STRING" id="10116.ENSRNOP00000001581"/>
<dbReference type="iPTMnet" id="B0BNM9"/>
<dbReference type="PhosphoSitePlus" id="B0BNM9"/>
<dbReference type="SwissPalm" id="B0BNM9"/>
<dbReference type="jPOST" id="B0BNM9"/>
<dbReference type="PaxDb" id="10116-ENSRNOP00000001581"/>
<dbReference type="PeptideAtlas" id="B0BNM9"/>
<dbReference type="Ensembl" id="ENSRNOT00000001581.7">
    <property type="protein sequence ID" value="ENSRNOP00000001581.5"/>
    <property type="gene ID" value="ENSRNOG00000001192.7"/>
</dbReference>
<dbReference type="GeneID" id="288707"/>
<dbReference type="KEGG" id="rno:288707"/>
<dbReference type="UCSC" id="RGD:1564442">
    <property type="organism name" value="rat"/>
</dbReference>
<dbReference type="AGR" id="RGD:1564442"/>
<dbReference type="CTD" id="51228"/>
<dbReference type="RGD" id="1564442">
    <property type="gene designation" value="Gltp"/>
</dbReference>
<dbReference type="eggNOG" id="KOG3221">
    <property type="taxonomic scope" value="Eukaryota"/>
</dbReference>
<dbReference type="GeneTree" id="ENSGT00940000155182"/>
<dbReference type="HOGENOM" id="CLU_079400_2_1_1"/>
<dbReference type="InParanoid" id="B0BNM9"/>
<dbReference type="OMA" id="EMHGAEW"/>
<dbReference type="OrthoDB" id="205255at2759"/>
<dbReference type="PhylomeDB" id="B0BNM9"/>
<dbReference type="TreeFam" id="TF317467"/>
<dbReference type="Reactome" id="R-RNO-9845576">
    <property type="pathway name" value="Glycosphingolipid transport"/>
</dbReference>
<dbReference type="PRO" id="PR:B0BNM9"/>
<dbReference type="Proteomes" id="UP000002494">
    <property type="component" value="Chromosome 12"/>
</dbReference>
<dbReference type="Proteomes" id="UP000234681">
    <property type="component" value="Chromosome 12"/>
</dbReference>
<dbReference type="Bgee" id="ENSRNOG00000001192">
    <property type="expression patterns" value="Expressed in esophagus and 20 other cell types or tissues"/>
</dbReference>
<dbReference type="GO" id="GO:0005829">
    <property type="term" value="C:cytosol"/>
    <property type="evidence" value="ECO:0000318"/>
    <property type="project" value="GO_Central"/>
</dbReference>
<dbReference type="GO" id="GO:1902387">
    <property type="term" value="F:ceramide 1-phosphate binding"/>
    <property type="evidence" value="ECO:0000318"/>
    <property type="project" value="GO_Central"/>
</dbReference>
<dbReference type="GO" id="GO:1902388">
    <property type="term" value="F:ceramide 1-phosphate transfer activity"/>
    <property type="evidence" value="ECO:0000318"/>
    <property type="project" value="GO_Central"/>
</dbReference>
<dbReference type="GO" id="GO:0051861">
    <property type="term" value="F:glycolipid binding"/>
    <property type="evidence" value="ECO:0000266"/>
    <property type="project" value="RGD"/>
</dbReference>
<dbReference type="GO" id="GO:0042802">
    <property type="term" value="F:identical protein binding"/>
    <property type="evidence" value="ECO:0000266"/>
    <property type="project" value="RGD"/>
</dbReference>
<dbReference type="GO" id="GO:0008289">
    <property type="term" value="F:lipid binding"/>
    <property type="evidence" value="ECO:0000266"/>
    <property type="project" value="RGD"/>
</dbReference>
<dbReference type="GO" id="GO:0120013">
    <property type="term" value="F:lipid transfer activity"/>
    <property type="evidence" value="ECO:0000266"/>
    <property type="project" value="RGD"/>
</dbReference>
<dbReference type="GO" id="GO:0035627">
    <property type="term" value="P:ceramide transport"/>
    <property type="evidence" value="ECO:0000318"/>
    <property type="project" value="GO_Central"/>
</dbReference>
<dbReference type="GO" id="GO:0120009">
    <property type="term" value="P:intermembrane lipid transfer"/>
    <property type="evidence" value="ECO:0000266"/>
    <property type="project" value="RGD"/>
</dbReference>
<dbReference type="GO" id="GO:0035902">
    <property type="term" value="P:response to immobilization stress"/>
    <property type="evidence" value="ECO:0000270"/>
    <property type="project" value="RGD"/>
</dbReference>
<dbReference type="FunFam" id="1.10.3520.10:FF:000003">
    <property type="entry name" value="glycolipid transfer protein"/>
    <property type="match status" value="1"/>
</dbReference>
<dbReference type="Gene3D" id="1.10.3520.10">
    <property type="entry name" value="Glycolipid transfer protein"/>
    <property type="match status" value="1"/>
</dbReference>
<dbReference type="InterPro" id="IPR036497">
    <property type="entry name" value="GLTP_sf"/>
</dbReference>
<dbReference type="InterPro" id="IPR014830">
    <property type="entry name" value="Glycolipid_transfer_prot_dom"/>
</dbReference>
<dbReference type="PANTHER" id="PTHR10219:SF97">
    <property type="entry name" value="GLYCOLIPID TRANSFER PROTEIN"/>
    <property type="match status" value="1"/>
</dbReference>
<dbReference type="PANTHER" id="PTHR10219">
    <property type="entry name" value="GLYCOLIPID TRANSFER PROTEIN-RELATED"/>
    <property type="match status" value="1"/>
</dbReference>
<dbReference type="Pfam" id="PF08718">
    <property type="entry name" value="GLTP"/>
    <property type="match status" value="1"/>
</dbReference>
<dbReference type="SUPFAM" id="SSF110004">
    <property type="entry name" value="Glycolipid transfer protein, GLTP"/>
    <property type="match status" value="1"/>
</dbReference>